<proteinExistence type="inferred from homology"/>
<protein>
    <recommendedName>
        <fullName>3,4-dihydroxy-2-butanone 4-phosphate synthase</fullName>
        <shortName>DHBP synthase</shortName>
        <ecNumber>4.1.99.12</ecNumber>
    </recommendedName>
</protein>
<sequence length="356" mass="39358">MNAILSDQKTFQAIIRVNQAIEDIRQGKMVVMVDDEDRENEGDLVYAASFSTPQKVNFMASHAKGLICVAISKKIANRLQLEPMVKKNDSSYETAFTITVDARTAATGISAGERDMTIKILADGGSHESELVRPGHIFPLIAKEGGALVRIGHTEGSVDLCRLAGQGDSAVICEIMKEDGTMARRPDLDIFCAKHELNIVYISDIVEYRMMNESLIRVIAESTTQFLGKDARRYDFVDHNDNHHIAYAFGNIKNRSAVKFHSIMPDNELLADTKKYNSLIQAIHYLQKSGGVLIFMDNGTQDMSKIREYGIGAQIIKHLGIENIELLSDSKNKEFVGISGFGLSVIKSTNVNETVA</sequence>
<accession>O68249</accession>
<feature type="chain" id="PRO_0000151796" description="3,4-dihydroxy-2-butanone 4-phosphate synthase">
    <location>
        <begin position="1"/>
        <end position="356"/>
    </location>
</feature>
<feature type="region of interest" description="DHBP synthase">
    <location>
        <begin position="1"/>
        <end position="211"/>
    </location>
</feature>
<feature type="region of interest" description="GTP cyclohydrolase II-like">
    <location>
        <begin position="212"/>
        <end position="356"/>
    </location>
</feature>
<feature type="binding site" evidence="1">
    <location>
        <begin position="38"/>
        <end position="39"/>
    </location>
    <ligand>
        <name>D-ribulose 5-phosphate</name>
        <dbReference type="ChEBI" id="CHEBI:58121"/>
    </ligand>
</feature>
<feature type="binding site" evidence="1">
    <location>
        <position position="39"/>
    </location>
    <ligand>
        <name>Mg(2+)</name>
        <dbReference type="ChEBI" id="CHEBI:18420"/>
        <label>1</label>
    </ligand>
</feature>
<feature type="binding site" evidence="1">
    <location>
        <position position="39"/>
    </location>
    <ligand>
        <name>Mg(2+)</name>
        <dbReference type="ChEBI" id="CHEBI:18420"/>
        <label>2</label>
    </ligand>
</feature>
<feature type="binding site" evidence="1">
    <location>
        <position position="43"/>
    </location>
    <ligand>
        <name>D-ribulose 5-phosphate</name>
        <dbReference type="ChEBI" id="CHEBI:58121"/>
    </ligand>
</feature>
<feature type="binding site" evidence="1">
    <location>
        <begin position="150"/>
        <end position="154"/>
    </location>
    <ligand>
        <name>D-ribulose 5-phosphate</name>
        <dbReference type="ChEBI" id="CHEBI:58121"/>
    </ligand>
</feature>
<feature type="binding site" evidence="1">
    <location>
        <position position="153"/>
    </location>
    <ligand>
        <name>Mg(2+)</name>
        <dbReference type="ChEBI" id="CHEBI:18420"/>
        <label>2</label>
    </ligand>
</feature>
<feature type="binding site" evidence="1">
    <location>
        <position position="174"/>
    </location>
    <ligand>
        <name>D-ribulose 5-phosphate</name>
        <dbReference type="ChEBI" id="CHEBI:58121"/>
    </ligand>
</feature>
<feature type="site" description="Essential for catalytic activity" evidence="1">
    <location>
        <position position="136"/>
    </location>
</feature>
<feature type="site" description="Essential for catalytic activity" evidence="1">
    <location>
        <position position="174"/>
    </location>
</feature>
<gene>
    <name type="primary">ribB</name>
</gene>
<comment type="function">
    <text evidence="1">Catalyzes the conversion of D-ribulose 5-phosphate to formate and 3,4-dihydroxy-2-butanone 4-phosphate.</text>
</comment>
<comment type="catalytic activity">
    <reaction>
        <text>D-ribulose 5-phosphate = (2S)-2-hydroxy-3-oxobutyl phosphate + formate + H(+)</text>
        <dbReference type="Rhea" id="RHEA:18457"/>
        <dbReference type="ChEBI" id="CHEBI:15378"/>
        <dbReference type="ChEBI" id="CHEBI:15740"/>
        <dbReference type="ChEBI" id="CHEBI:58121"/>
        <dbReference type="ChEBI" id="CHEBI:58830"/>
        <dbReference type="EC" id="4.1.99.12"/>
    </reaction>
</comment>
<comment type="cofactor">
    <cofactor evidence="1">
        <name>Mg(2+)</name>
        <dbReference type="ChEBI" id="CHEBI:18420"/>
    </cofactor>
    <cofactor evidence="1">
        <name>Mn(2+)</name>
        <dbReference type="ChEBI" id="CHEBI:29035"/>
    </cofactor>
    <text evidence="1">Binds 2 divalent metal cations per subunit. Magnesium or manganese.</text>
</comment>
<comment type="pathway">
    <text>Cofactor biosynthesis; riboflavin biosynthesis; 2-hydroxy-3-oxobutyl phosphate from D-ribulose 5-phosphate: step 1/1.</text>
</comment>
<comment type="similarity">
    <text evidence="2">In the N-terminal section; belongs to the DHBP synthase family.</text>
</comment>
<comment type="similarity">
    <text evidence="2">In the C-terminal section; belongs to the GTP cyclohydrolase II family.</text>
</comment>
<evidence type="ECO:0000250" key="1"/>
<evidence type="ECO:0000305" key="2"/>
<name>RIBB_SULMU</name>
<dbReference type="EC" id="4.1.99.12"/>
<dbReference type="EMBL" id="AF022812">
    <property type="protein sequence ID" value="AAC60785.1"/>
    <property type="molecule type" value="Genomic_DNA"/>
</dbReference>
<dbReference type="RefSeq" id="WP_025344662.1">
    <property type="nucleotide sequence ID" value="NZ_CP042966.1"/>
</dbReference>
<dbReference type="SMR" id="O68249"/>
<dbReference type="STRING" id="1150621.SMUL_1528"/>
<dbReference type="OrthoDB" id="9793111at2"/>
<dbReference type="UniPathway" id="UPA00275">
    <property type="reaction ID" value="UER00399"/>
</dbReference>
<dbReference type="GO" id="GO:0005829">
    <property type="term" value="C:cytosol"/>
    <property type="evidence" value="ECO:0007669"/>
    <property type="project" value="TreeGrafter"/>
</dbReference>
<dbReference type="GO" id="GO:0008686">
    <property type="term" value="F:3,4-dihydroxy-2-butanone-4-phosphate synthase activity"/>
    <property type="evidence" value="ECO:0007669"/>
    <property type="project" value="UniProtKB-UniRule"/>
</dbReference>
<dbReference type="GO" id="GO:0003935">
    <property type="term" value="F:GTP cyclohydrolase II activity"/>
    <property type="evidence" value="ECO:0007669"/>
    <property type="project" value="TreeGrafter"/>
</dbReference>
<dbReference type="GO" id="GO:0000287">
    <property type="term" value="F:magnesium ion binding"/>
    <property type="evidence" value="ECO:0007669"/>
    <property type="project" value="UniProtKB-UniRule"/>
</dbReference>
<dbReference type="GO" id="GO:0030145">
    <property type="term" value="F:manganese ion binding"/>
    <property type="evidence" value="ECO:0007669"/>
    <property type="project" value="UniProtKB-UniRule"/>
</dbReference>
<dbReference type="GO" id="GO:0009231">
    <property type="term" value="P:riboflavin biosynthetic process"/>
    <property type="evidence" value="ECO:0007669"/>
    <property type="project" value="UniProtKB-UniRule"/>
</dbReference>
<dbReference type="FunFam" id="3.90.870.10:FF:000001">
    <property type="entry name" value="Riboflavin biosynthesis protein RibBA"/>
    <property type="match status" value="1"/>
</dbReference>
<dbReference type="Gene3D" id="3.90.870.10">
    <property type="entry name" value="DHBP synthase"/>
    <property type="match status" value="1"/>
</dbReference>
<dbReference type="Gene3D" id="3.40.50.10990">
    <property type="entry name" value="GTP cyclohydrolase II"/>
    <property type="match status" value="1"/>
</dbReference>
<dbReference type="HAMAP" id="MF_00180">
    <property type="entry name" value="RibB"/>
    <property type="match status" value="1"/>
</dbReference>
<dbReference type="InterPro" id="IPR017945">
    <property type="entry name" value="DHBP_synth_RibB-like_a/b_dom"/>
</dbReference>
<dbReference type="InterPro" id="IPR000422">
    <property type="entry name" value="DHBP_synthase_RibB"/>
</dbReference>
<dbReference type="InterPro" id="IPR032677">
    <property type="entry name" value="GTP_cyclohydro_II"/>
</dbReference>
<dbReference type="InterPro" id="IPR036144">
    <property type="entry name" value="RibA-like_sf"/>
</dbReference>
<dbReference type="NCBIfam" id="NF006804">
    <property type="entry name" value="PRK09314.1"/>
    <property type="match status" value="1"/>
</dbReference>
<dbReference type="NCBIfam" id="TIGR00506">
    <property type="entry name" value="ribB"/>
    <property type="match status" value="1"/>
</dbReference>
<dbReference type="PANTHER" id="PTHR21327:SF18">
    <property type="entry name" value="3,4-DIHYDROXY-2-BUTANONE 4-PHOSPHATE SYNTHASE"/>
    <property type="match status" value="1"/>
</dbReference>
<dbReference type="PANTHER" id="PTHR21327">
    <property type="entry name" value="GTP CYCLOHYDROLASE II-RELATED"/>
    <property type="match status" value="1"/>
</dbReference>
<dbReference type="Pfam" id="PF00926">
    <property type="entry name" value="DHBP_synthase"/>
    <property type="match status" value="1"/>
</dbReference>
<dbReference type="Pfam" id="PF00925">
    <property type="entry name" value="GTP_cyclohydro2"/>
    <property type="match status" value="1"/>
</dbReference>
<dbReference type="PIRSF" id="PIRSF001259">
    <property type="entry name" value="RibA"/>
    <property type="match status" value="1"/>
</dbReference>
<dbReference type="SUPFAM" id="SSF142695">
    <property type="entry name" value="RibA-like"/>
    <property type="match status" value="1"/>
</dbReference>
<dbReference type="SUPFAM" id="SSF55821">
    <property type="entry name" value="YrdC/RibB"/>
    <property type="match status" value="1"/>
</dbReference>
<organism>
    <name type="scientific">Sulfurospirillum multivorans</name>
    <name type="common">Dehalospirillum multivorans</name>
    <dbReference type="NCBI Taxonomy" id="66821"/>
    <lineage>
        <taxon>Bacteria</taxon>
        <taxon>Pseudomonadati</taxon>
        <taxon>Campylobacterota</taxon>
        <taxon>Epsilonproteobacteria</taxon>
        <taxon>Campylobacterales</taxon>
        <taxon>Sulfurospirillaceae</taxon>
        <taxon>Sulfurospirillum</taxon>
    </lineage>
</organism>
<reference key="1">
    <citation type="journal article" date="1998" name="J. Bacteriol.">
        <title>Tetrachloroethene dehalogenase from Dehalospirillum multivorans: cloning, sequencing of the encoding genes, and expression of the pceA gene in Escherichia coli.</title>
        <authorList>
            <person name="Neumann A."/>
            <person name="Wohlfarth G."/>
            <person name="Diekert G."/>
        </authorList>
    </citation>
    <scope>NUCLEOTIDE SEQUENCE [GENOMIC DNA]</scope>
</reference>
<keyword id="KW-0456">Lyase</keyword>
<keyword id="KW-0460">Magnesium</keyword>
<keyword id="KW-0464">Manganese</keyword>
<keyword id="KW-0479">Metal-binding</keyword>
<keyword id="KW-0686">Riboflavin biosynthesis</keyword>